<reference key="1">
    <citation type="submission" date="2008-05" db="EMBL/GenBank/DDBJ databases">
        <title>Genome sequence of Clostridium botulinum Ba4 strain 657.</title>
        <authorList>
            <person name="Shrivastava S."/>
            <person name="Brown J.L."/>
            <person name="Bruce D."/>
            <person name="Detter C."/>
            <person name="Munk C."/>
            <person name="Smith L.A."/>
            <person name="Smith T.J."/>
            <person name="Sutton G."/>
            <person name="Brettin T.S."/>
        </authorList>
    </citation>
    <scope>NUCLEOTIDE SEQUENCE [LARGE SCALE GENOMIC DNA]</scope>
    <source>
        <strain>657 / Type Ba4</strain>
    </source>
</reference>
<sequence>MYAVVVTGGKQYKVAEGDVLFVEKLTADVDSTVELDNVLLVGKDNGETVVGKPMVEGAKVTAKVLAQGKAKKVVVFKYKPKKDYRKKQGHRQPYTKIQIEKINA</sequence>
<name>RL21_CLOB6</name>
<gene>
    <name evidence="1" type="primary">rplU</name>
    <name type="ordered locus">CLJ_B3246</name>
</gene>
<keyword id="KW-0687">Ribonucleoprotein</keyword>
<keyword id="KW-0689">Ribosomal protein</keyword>
<keyword id="KW-0694">RNA-binding</keyword>
<keyword id="KW-0699">rRNA-binding</keyword>
<evidence type="ECO:0000255" key="1">
    <source>
        <dbReference type="HAMAP-Rule" id="MF_01363"/>
    </source>
</evidence>
<evidence type="ECO:0000305" key="2"/>
<organism>
    <name type="scientific">Clostridium botulinum (strain 657 / Type Ba4)</name>
    <dbReference type="NCBI Taxonomy" id="515621"/>
    <lineage>
        <taxon>Bacteria</taxon>
        <taxon>Bacillati</taxon>
        <taxon>Bacillota</taxon>
        <taxon>Clostridia</taxon>
        <taxon>Eubacteriales</taxon>
        <taxon>Clostridiaceae</taxon>
        <taxon>Clostridium</taxon>
    </lineage>
</organism>
<protein>
    <recommendedName>
        <fullName evidence="1">Large ribosomal subunit protein bL21</fullName>
    </recommendedName>
    <alternativeName>
        <fullName evidence="2">50S ribosomal protein L21</fullName>
    </alternativeName>
</protein>
<feature type="chain" id="PRO_1000214882" description="Large ribosomal subunit protein bL21">
    <location>
        <begin position="1"/>
        <end position="104"/>
    </location>
</feature>
<comment type="function">
    <text evidence="1">This protein binds to 23S rRNA in the presence of protein L20.</text>
</comment>
<comment type="subunit">
    <text evidence="1">Part of the 50S ribosomal subunit. Contacts protein L20.</text>
</comment>
<comment type="similarity">
    <text evidence="1">Belongs to the bacterial ribosomal protein bL21 family.</text>
</comment>
<proteinExistence type="inferred from homology"/>
<accession>C3L3J6</accession>
<dbReference type="EMBL" id="CP001083">
    <property type="protein sequence ID" value="ACQ53763.1"/>
    <property type="molecule type" value="Genomic_DNA"/>
</dbReference>
<dbReference type="RefSeq" id="WP_003357920.1">
    <property type="nucleotide sequence ID" value="NC_012658.1"/>
</dbReference>
<dbReference type="SMR" id="C3L3J6"/>
<dbReference type="KEGG" id="cbi:CLJ_B3246"/>
<dbReference type="HOGENOM" id="CLU_061463_3_2_9"/>
<dbReference type="Proteomes" id="UP000002333">
    <property type="component" value="Chromosome"/>
</dbReference>
<dbReference type="GO" id="GO:0005737">
    <property type="term" value="C:cytoplasm"/>
    <property type="evidence" value="ECO:0007669"/>
    <property type="project" value="UniProtKB-ARBA"/>
</dbReference>
<dbReference type="GO" id="GO:1990904">
    <property type="term" value="C:ribonucleoprotein complex"/>
    <property type="evidence" value="ECO:0007669"/>
    <property type="project" value="UniProtKB-KW"/>
</dbReference>
<dbReference type="GO" id="GO:0005840">
    <property type="term" value="C:ribosome"/>
    <property type="evidence" value="ECO:0007669"/>
    <property type="project" value="UniProtKB-KW"/>
</dbReference>
<dbReference type="GO" id="GO:0019843">
    <property type="term" value="F:rRNA binding"/>
    <property type="evidence" value="ECO:0007669"/>
    <property type="project" value="UniProtKB-UniRule"/>
</dbReference>
<dbReference type="GO" id="GO:0003735">
    <property type="term" value="F:structural constituent of ribosome"/>
    <property type="evidence" value="ECO:0007669"/>
    <property type="project" value="InterPro"/>
</dbReference>
<dbReference type="GO" id="GO:0006412">
    <property type="term" value="P:translation"/>
    <property type="evidence" value="ECO:0007669"/>
    <property type="project" value="UniProtKB-UniRule"/>
</dbReference>
<dbReference type="HAMAP" id="MF_01363">
    <property type="entry name" value="Ribosomal_bL21"/>
    <property type="match status" value="1"/>
</dbReference>
<dbReference type="InterPro" id="IPR028909">
    <property type="entry name" value="bL21-like"/>
</dbReference>
<dbReference type="InterPro" id="IPR036164">
    <property type="entry name" value="bL21-like_sf"/>
</dbReference>
<dbReference type="InterPro" id="IPR001787">
    <property type="entry name" value="Ribosomal_bL21"/>
</dbReference>
<dbReference type="InterPro" id="IPR018258">
    <property type="entry name" value="Ribosomal_bL21_CS"/>
</dbReference>
<dbReference type="NCBIfam" id="TIGR00061">
    <property type="entry name" value="L21"/>
    <property type="match status" value="1"/>
</dbReference>
<dbReference type="PANTHER" id="PTHR21349">
    <property type="entry name" value="50S RIBOSOMAL PROTEIN L21"/>
    <property type="match status" value="1"/>
</dbReference>
<dbReference type="PANTHER" id="PTHR21349:SF0">
    <property type="entry name" value="LARGE RIBOSOMAL SUBUNIT PROTEIN BL21M"/>
    <property type="match status" value="1"/>
</dbReference>
<dbReference type="Pfam" id="PF00829">
    <property type="entry name" value="Ribosomal_L21p"/>
    <property type="match status" value="1"/>
</dbReference>
<dbReference type="SUPFAM" id="SSF141091">
    <property type="entry name" value="L21p-like"/>
    <property type="match status" value="1"/>
</dbReference>
<dbReference type="PROSITE" id="PS01169">
    <property type="entry name" value="RIBOSOMAL_L21"/>
    <property type="match status" value="1"/>
</dbReference>